<accession>A1X159</accession>
<comment type="function">
    <text evidence="1">Provides adhesiveness to the mussel's foot. Mussels produce one of the strongest water insoluble glues. The mussel's adhesive is a bundle of threads, called a byssus, formed by a fibrous collagenous core coated with adhesive proteins (By similarity).</text>
</comment>
<comment type="subcellular location">
    <subcellularLocation>
        <location evidence="1">Secreted</location>
    </subcellularLocation>
</comment>
<comment type="tissue specificity">
    <text evidence="4">Produced by the byssal gland.</text>
</comment>
<comment type="domain">
    <text evidence="4">Almost exclusively composed of repeats of the decapeptides APPPAWTAWK and ATPKPWTAWK.</text>
</comment>
<comment type="miscellaneous">
    <text evidence="4 6">The identity of the hexosyl group at the C-2 position in the modified tryptophan residues has not been confirmed, but UV absorbance data suggests that it is mannose.</text>
</comment>
<proteinExistence type="evidence at protein level"/>
<dbReference type="EMBL" id="DQ000155">
    <property type="protein sequence ID" value="AAY46227.1"/>
    <property type="molecule type" value="mRNA"/>
</dbReference>
<dbReference type="GlyCosmos" id="A1X159">
    <property type="glycosylation" value="53 sites, No reported glycans"/>
</dbReference>
<dbReference type="iPTMnet" id="A1X159"/>
<dbReference type="GO" id="GO:0005576">
    <property type="term" value="C:extracellular region"/>
    <property type="evidence" value="ECO:0000250"/>
    <property type="project" value="UniProtKB"/>
</dbReference>
<dbReference type="InterPro" id="IPR008160">
    <property type="entry name" value="Collagen"/>
</dbReference>
<dbReference type="PANTHER" id="PTHR24637">
    <property type="entry name" value="COLLAGEN"/>
    <property type="match status" value="1"/>
</dbReference>
<dbReference type="PANTHER" id="PTHR24637:SF421">
    <property type="entry name" value="CUTICLE COLLAGEN DPY-2"/>
    <property type="match status" value="1"/>
</dbReference>
<dbReference type="Pfam" id="PF01391">
    <property type="entry name" value="Collagen"/>
    <property type="match status" value="1"/>
</dbReference>
<protein>
    <recommendedName>
        <fullName evidence="5 8">Foot protein 1 variant 2</fullName>
    </recommendedName>
</protein>
<name>FP1V2_PERVI</name>
<evidence type="ECO:0000250" key="1">
    <source>
        <dbReference type="UniProtKB" id="Q25460"/>
    </source>
</evidence>
<evidence type="ECO:0000255" key="2"/>
<evidence type="ECO:0000256" key="3">
    <source>
        <dbReference type="SAM" id="MobiDB-lite"/>
    </source>
</evidence>
<evidence type="ECO:0000269" key="4">
    <source>
    </source>
</evidence>
<evidence type="ECO:0000303" key="5">
    <source>
    </source>
</evidence>
<evidence type="ECO:0000305" key="6"/>
<evidence type="ECO:0000305" key="7">
    <source>
    </source>
</evidence>
<evidence type="ECO:0000312" key="8">
    <source>
        <dbReference type="EMBL" id="AAY46227.1"/>
    </source>
</evidence>
<organism>
    <name type="scientific">Perna viridis</name>
    <name type="common">Asian green mussel</name>
    <name type="synonym">Mytilus viridis</name>
    <dbReference type="NCBI Taxonomy" id="73031"/>
    <lineage>
        <taxon>Eukaryota</taxon>
        <taxon>Metazoa</taxon>
        <taxon>Spiralia</taxon>
        <taxon>Lophotrochozoa</taxon>
        <taxon>Mollusca</taxon>
        <taxon>Bivalvia</taxon>
        <taxon>Autobranchia</taxon>
        <taxon>Pteriomorphia</taxon>
        <taxon>Mytilida</taxon>
        <taxon>Mytiloidea</taxon>
        <taxon>Mytilidae</taxon>
        <taxon>Mytilinae</taxon>
        <taxon>Perna</taxon>
    </lineage>
</organism>
<gene>
    <name evidence="8" type="primary">fp-1</name>
</gene>
<feature type="signal peptide" evidence="4">
    <location>
        <begin position="1"/>
        <end position="20"/>
    </location>
</feature>
<feature type="chain" id="PRO_0000395668" description="Foot protein 1 variant 2" evidence="4">
    <location>
        <begin position="21"/>
        <end position="431"/>
    </location>
</feature>
<feature type="repeat" description="A-1; approximate" evidence="4">
    <location>
        <begin position="41"/>
        <end position="50"/>
    </location>
</feature>
<feature type="repeat" description="A-2; approximate" evidence="4">
    <location>
        <begin position="51"/>
        <end position="60"/>
    </location>
</feature>
<feature type="repeat" description="B-1" evidence="4">
    <location>
        <begin position="61"/>
        <end position="70"/>
    </location>
</feature>
<feature type="repeat" description="A-3" evidence="4">
    <location>
        <begin position="71"/>
        <end position="80"/>
    </location>
</feature>
<feature type="repeat" description="B-2" evidence="4">
    <location>
        <begin position="81"/>
        <end position="90"/>
    </location>
</feature>
<feature type="repeat" description="A-4; approximate" evidence="4">
    <location>
        <begin position="91"/>
        <end position="100"/>
    </location>
</feature>
<feature type="repeat" description="B-3" evidence="4">
    <location>
        <begin position="101"/>
        <end position="110"/>
    </location>
</feature>
<feature type="repeat" description="A-5; approximate" evidence="4">
    <location>
        <begin position="111"/>
        <end position="120"/>
    </location>
</feature>
<feature type="repeat" description="B-4; approximate" evidence="4">
    <location>
        <begin position="121"/>
        <end position="130"/>
    </location>
</feature>
<feature type="repeat" description="A-6; approximate" evidence="4">
    <location>
        <begin position="131"/>
        <end position="140"/>
    </location>
</feature>
<feature type="repeat" description="B-5; approximate" evidence="4">
    <location>
        <begin position="141"/>
        <end position="150"/>
    </location>
</feature>
<feature type="repeat" description="B-6" evidence="4">
    <location>
        <begin position="151"/>
        <end position="160"/>
    </location>
</feature>
<feature type="repeat" description="A-7" evidence="4">
    <location>
        <begin position="161"/>
        <end position="170"/>
    </location>
</feature>
<feature type="repeat" description="B-7" evidence="4">
    <location>
        <begin position="171"/>
        <end position="180"/>
    </location>
</feature>
<feature type="repeat" description="B-8" evidence="4">
    <location>
        <begin position="181"/>
        <end position="190"/>
    </location>
</feature>
<feature type="repeat" description="B-9" evidence="4">
    <location>
        <begin position="191"/>
        <end position="200"/>
    </location>
</feature>
<feature type="repeat" description="B-10; approximate" evidence="4">
    <location>
        <begin position="201"/>
        <end position="210"/>
    </location>
</feature>
<feature type="repeat" description="B-11" evidence="4">
    <location>
        <begin position="211"/>
        <end position="220"/>
    </location>
</feature>
<feature type="repeat" description="A-8" evidence="4">
    <location>
        <begin position="221"/>
        <end position="230"/>
    </location>
</feature>
<feature type="repeat" description="B-12" evidence="4">
    <location>
        <begin position="231"/>
        <end position="240"/>
    </location>
</feature>
<feature type="repeat" description="A-9" evidence="4">
    <location>
        <begin position="241"/>
        <end position="250"/>
    </location>
</feature>
<feature type="repeat" description="B-13" evidence="4">
    <location>
        <begin position="251"/>
        <end position="260"/>
    </location>
</feature>
<feature type="repeat" description="A-10" evidence="4">
    <location>
        <begin position="261"/>
        <end position="270"/>
    </location>
</feature>
<feature type="repeat" description="B-14" evidence="4">
    <location>
        <begin position="271"/>
        <end position="280"/>
    </location>
</feature>
<feature type="repeat" description="B-15" evidence="4">
    <location>
        <begin position="281"/>
        <end position="290"/>
    </location>
</feature>
<feature type="repeat" description="B-16" evidence="4">
    <location>
        <begin position="291"/>
        <end position="300"/>
    </location>
</feature>
<feature type="repeat" description="B-17; approximate" evidence="4">
    <location>
        <begin position="301"/>
        <end position="310"/>
    </location>
</feature>
<feature type="domain" description="Collagen-like" evidence="2">
    <location>
        <begin position="329"/>
        <end position="380"/>
    </location>
</feature>
<feature type="region of interest" description="13 X 10 AA A-P-P-P-A-W-T-A-W-K" evidence="4">
    <location>
        <begin position="41"/>
        <end position="270"/>
    </location>
</feature>
<feature type="region of interest" description="27 X 10 AA A-T-P-K-P-W-T-A-W-K" evidence="4">
    <location>
        <begin position="61"/>
        <end position="310"/>
    </location>
</feature>
<feature type="region of interest" description="Disordered" evidence="3">
    <location>
        <begin position="322"/>
        <end position="377"/>
    </location>
</feature>
<feature type="compositionally biased region" description="Gly residues" evidence="3">
    <location>
        <begin position="323"/>
        <end position="332"/>
    </location>
</feature>
<feature type="compositionally biased region" description="Low complexity" evidence="3">
    <location>
        <begin position="336"/>
        <end position="366"/>
    </location>
</feature>
<feature type="modified residue" description="3',4'-dihydroxyphenylalanine" evidence="4">
    <location>
        <position position="22"/>
    </location>
</feature>
<feature type="modified residue" description="4-hydroxyproline" evidence="4">
    <location>
        <position position="33"/>
    </location>
</feature>
<feature type="modified residue" description="7'-hydroxytryptophan" evidence="4">
    <location>
        <position position="46"/>
    </location>
</feature>
<feature type="modified residue" description="7'-hydroxytryptophan" evidence="4">
    <location>
        <position position="49"/>
    </location>
</feature>
<feature type="modified residue" description="7'-hydroxytryptophan" evidence="4">
    <location>
        <position position="56"/>
    </location>
</feature>
<feature type="modified residue" description="7'-hydroxytryptophan" evidence="4">
    <location>
        <position position="59"/>
    </location>
</feature>
<feature type="modified residue" description="4-hydroxyproline" evidence="4">
    <location>
        <position position="65"/>
    </location>
</feature>
<feature type="modified residue" description="7'-hydroxytryptophan" evidence="4">
    <location>
        <position position="69"/>
    </location>
</feature>
<feature type="modified residue" description="4-hydroxyproline" evidence="4">
    <location>
        <position position="72"/>
    </location>
</feature>
<feature type="modified residue" description="4-hydroxyproline" evidence="4">
    <location>
        <position position="73"/>
    </location>
</feature>
<feature type="modified residue" description="4-hydroxyproline" evidence="7">
    <location>
        <position position="74"/>
    </location>
</feature>
<feature type="modified residue" description="7'-hydroxytryptophan" evidence="4">
    <location>
        <position position="76"/>
    </location>
</feature>
<feature type="modified residue" description="7'-hydroxytryptophan" evidence="4">
    <location>
        <position position="79"/>
    </location>
</feature>
<feature type="modified residue" description="4-hydroxyproline" evidence="4">
    <location>
        <position position="85"/>
    </location>
</feature>
<feature type="modified residue" description="7'-hydroxytryptophan" evidence="4">
    <location>
        <position position="89"/>
    </location>
</feature>
<feature type="modified residue" description="4-hydroxyproline" evidence="4">
    <location>
        <position position="92"/>
    </location>
</feature>
<feature type="modified residue" description="4-hydroxyproline" evidence="4">
    <location>
        <position position="93"/>
    </location>
</feature>
<feature type="modified residue" description="4-hydroxyproline" evidence="7">
    <location>
        <position position="94"/>
    </location>
</feature>
<feature type="modified residue" description="7'-hydroxytryptophan" evidence="4">
    <location>
        <position position="96"/>
    </location>
</feature>
<feature type="modified residue" description="7'-hydroxytryptophan" evidence="4">
    <location>
        <position position="99"/>
    </location>
</feature>
<feature type="modified residue" description="4-hydroxyproline" evidence="4">
    <location>
        <position position="105"/>
    </location>
</feature>
<feature type="modified residue" description="7'-hydroxytryptophan" evidence="4">
    <location>
        <position position="109"/>
    </location>
</feature>
<feature type="modified residue" description="4-hydroxyproline" evidence="4">
    <location>
        <position position="112"/>
    </location>
</feature>
<feature type="modified residue" description="4-hydroxyproline" evidence="4">
    <location>
        <position position="113"/>
    </location>
</feature>
<feature type="modified residue" description="4-hydroxyproline" evidence="7">
    <location>
        <position position="114"/>
    </location>
</feature>
<feature type="modified residue" description="7'-hydroxytryptophan" evidence="4">
    <location>
        <position position="116"/>
    </location>
</feature>
<feature type="modified residue" description="7'-hydroxytryptophan" evidence="4">
    <location>
        <position position="119"/>
    </location>
</feature>
<feature type="modified residue" description="4-hydroxyproline" evidence="4">
    <location>
        <position position="125"/>
    </location>
</feature>
<feature type="modified residue" description="7'-hydroxytryptophan" evidence="4">
    <location>
        <position position="129"/>
    </location>
</feature>
<feature type="modified residue" description="4-hydroxyproline" evidence="4">
    <location>
        <position position="132"/>
    </location>
</feature>
<feature type="modified residue" description="4-hydroxyproline" evidence="4">
    <location>
        <position position="133"/>
    </location>
</feature>
<feature type="modified residue" description="4-hydroxyproline" evidence="7">
    <location>
        <position position="134"/>
    </location>
</feature>
<feature type="modified residue" description="7'-hydroxytryptophan" evidence="4">
    <location>
        <position position="136"/>
    </location>
</feature>
<feature type="modified residue" description="7'-hydroxytryptophan" evidence="4">
    <location>
        <position position="139"/>
    </location>
</feature>
<feature type="modified residue" description="4-hydroxyproline" evidence="4">
    <location>
        <position position="145"/>
    </location>
</feature>
<feature type="modified residue" description="7'-hydroxytryptophan" evidence="4">
    <location>
        <position position="149"/>
    </location>
</feature>
<feature type="modified residue" description="4-hydroxyproline" evidence="4">
    <location>
        <position position="155"/>
    </location>
</feature>
<feature type="modified residue" description="7'-hydroxytryptophan" evidence="4">
    <location>
        <position position="159"/>
    </location>
</feature>
<feature type="modified residue" description="4-hydroxyproline" evidence="4">
    <location>
        <position position="162"/>
    </location>
</feature>
<feature type="modified residue" description="4-hydroxyproline" evidence="4">
    <location>
        <position position="163"/>
    </location>
</feature>
<feature type="modified residue" description="4-hydroxyproline" evidence="7">
    <location>
        <position position="164"/>
    </location>
</feature>
<feature type="modified residue" description="7'-hydroxytryptophan" evidence="4">
    <location>
        <position position="166"/>
    </location>
</feature>
<feature type="modified residue" description="7'-hydroxytryptophan" evidence="4">
    <location>
        <position position="169"/>
    </location>
</feature>
<feature type="modified residue" description="4-hydroxyproline" evidence="4">
    <location>
        <position position="175"/>
    </location>
</feature>
<feature type="modified residue" description="7'-hydroxytryptophan" evidence="4">
    <location>
        <position position="179"/>
    </location>
</feature>
<feature type="modified residue" description="4-hydroxyproline" evidence="4">
    <location>
        <position position="185"/>
    </location>
</feature>
<feature type="modified residue" description="7'-hydroxytryptophan" evidence="4">
    <location>
        <position position="189"/>
    </location>
</feature>
<feature type="modified residue" description="4-hydroxyproline" evidence="4">
    <location>
        <position position="195"/>
    </location>
</feature>
<feature type="modified residue" description="7'-hydroxytryptophan" evidence="4">
    <location>
        <position position="199"/>
    </location>
</feature>
<feature type="modified residue" description="4-hydroxyproline" evidence="4">
    <location>
        <position position="205"/>
    </location>
</feature>
<feature type="modified residue" description="7'-hydroxytryptophan" evidence="4">
    <location>
        <position position="209"/>
    </location>
</feature>
<feature type="modified residue" description="4-hydroxyproline" evidence="4">
    <location>
        <position position="215"/>
    </location>
</feature>
<feature type="modified residue" description="7'-hydroxytryptophan" evidence="4">
    <location>
        <position position="219"/>
    </location>
</feature>
<feature type="modified residue" description="4-hydroxyproline" evidence="4">
    <location>
        <position position="222"/>
    </location>
</feature>
<feature type="modified residue" description="4-hydroxyproline" evidence="4">
    <location>
        <position position="223"/>
    </location>
</feature>
<feature type="modified residue" description="4-hydroxyproline" evidence="7">
    <location>
        <position position="224"/>
    </location>
</feature>
<feature type="modified residue" description="7'-hydroxytryptophan" evidence="4">
    <location>
        <position position="226"/>
    </location>
</feature>
<feature type="modified residue" description="7'-hydroxytryptophan" evidence="4">
    <location>
        <position position="229"/>
    </location>
</feature>
<feature type="modified residue" description="4-hydroxyproline" evidence="4">
    <location>
        <position position="235"/>
    </location>
</feature>
<feature type="modified residue" description="7'-hydroxytryptophan" evidence="4">
    <location>
        <position position="239"/>
    </location>
</feature>
<feature type="modified residue" description="4-hydroxyproline" evidence="4">
    <location>
        <position position="242"/>
    </location>
</feature>
<feature type="modified residue" description="4-hydroxyproline" evidence="4">
    <location>
        <position position="243"/>
    </location>
</feature>
<feature type="modified residue" description="4-hydroxyproline" evidence="7">
    <location>
        <position position="244"/>
    </location>
</feature>
<feature type="modified residue" description="7'-hydroxytryptophan" evidence="4">
    <location>
        <position position="246"/>
    </location>
</feature>
<feature type="modified residue" description="7'-hydroxytryptophan" evidence="4">
    <location>
        <position position="249"/>
    </location>
</feature>
<feature type="modified residue" description="4-hydroxyproline" evidence="4">
    <location>
        <position position="255"/>
    </location>
</feature>
<feature type="modified residue" description="7'-hydroxytryptophan" evidence="4">
    <location>
        <position position="259"/>
    </location>
</feature>
<feature type="modified residue" description="4-hydroxyproline" evidence="4">
    <location>
        <position position="262"/>
    </location>
</feature>
<feature type="modified residue" description="4-hydroxyproline" evidence="4">
    <location>
        <position position="263"/>
    </location>
</feature>
<feature type="modified residue" description="4-hydroxyproline" evidence="7">
    <location>
        <position position="264"/>
    </location>
</feature>
<feature type="modified residue" description="7'-hydroxytryptophan" evidence="4">
    <location>
        <position position="266"/>
    </location>
</feature>
<feature type="modified residue" description="7'-hydroxytryptophan" evidence="4">
    <location>
        <position position="269"/>
    </location>
</feature>
<feature type="modified residue" description="4-hydroxyproline" evidence="4">
    <location>
        <position position="275"/>
    </location>
</feature>
<feature type="modified residue" description="7'-hydroxytryptophan" evidence="4">
    <location>
        <position position="279"/>
    </location>
</feature>
<feature type="modified residue" description="4-hydroxyproline" evidence="4">
    <location>
        <position position="285"/>
    </location>
</feature>
<feature type="modified residue" description="7'-hydroxytryptophan" evidence="4">
    <location>
        <position position="289"/>
    </location>
</feature>
<feature type="modified residue" description="4-hydroxyproline" evidence="4">
    <location>
        <position position="295"/>
    </location>
</feature>
<feature type="modified residue" description="7'-hydroxytryptophan" evidence="4">
    <location>
        <position position="299"/>
    </location>
</feature>
<feature type="modified residue" description="4-hydroxyproline" evidence="4">
    <location>
        <position position="305"/>
    </location>
</feature>
<feature type="modified residue" description="7'-hydroxytryptophan" evidence="4">
    <location>
        <position position="309"/>
    </location>
</feature>
<feature type="modified residue" description="4-hydroxyproline" evidence="4">
    <location>
        <position position="367"/>
    </location>
</feature>
<feature type="modified residue" description="4-hydroxyproline" evidence="4">
    <location>
        <position position="370"/>
    </location>
</feature>
<feature type="modified residue" description="4-hydroxyproline" evidence="4">
    <location>
        <position position="376"/>
    </location>
</feature>
<feature type="glycosylation site" description="C-linked (Man) hydroxytryptophan" evidence="4">
    <location>
        <position position="46"/>
    </location>
</feature>
<feature type="glycosylation site" description="C-linked (Man) hydroxytryptophan" evidence="4">
    <location>
        <position position="49"/>
    </location>
</feature>
<feature type="glycosylation site" description="C-linked (Man) hydroxytryptophan" evidence="4">
    <location>
        <position position="56"/>
    </location>
</feature>
<feature type="glycosylation site" description="C-linked (Man) hydroxytryptophan" evidence="4">
    <location>
        <position position="59"/>
    </location>
</feature>
<feature type="glycosylation site" description="C-linked (Man) tryptophan" evidence="4">
    <location>
        <position position="66"/>
    </location>
</feature>
<feature type="glycosylation site" description="C-linked (Man) hydroxytryptophan" evidence="4">
    <location>
        <position position="69"/>
    </location>
</feature>
<feature type="glycosylation site" description="C-linked (Man) hydroxytryptophan" evidence="4">
    <location>
        <position position="76"/>
    </location>
</feature>
<feature type="glycosylation site" description="C-linked (Man) hydroxytryptophan" evidence="4">
    <location>
        <position position="79"/>
    </location>
</feature>
<feature type="glycosylation site" description="C-linked (Man) tryptophan" evidence="4">
    <location>
        <position position="86"/>
    </location>
</feature>
<feature type="glycosylation site" description="C-linked (Man) hydroxytryptophan" evidence="4">
    <location>
        <position position="89"/>
    </location>
</feature>
<feature type="glycosylation site" description="C-linked (Man) hydroxytryptophan" evidence="4">
    <location>
        <position position="96"/>
    </location>
</feature>
<feature type="glycosylation site" description="C-linked (Man) hydroxytryptophan" evidence="4">
    <location>
        <position position="99"/>
    </location>
</feature>
<feature type="glycosylation site" description="C-linked (Man) tryptophan" evidence="4">
    <location>
        <position position="106"/>
    </location>
</feature>
<feature type="glycosylation site" description="C-linked (Man) hydroxytryptophan" evidence="4">
    <location>
        <position position="109"/>
    </location>
</feature>
<feature type="glycosylation site" description="C-linked (Man) hydroxytryptophan" evidence="4">
    <location>
        <position position="116"/>
    </location>
</feature>
<feature type="glycosylation site" description="C-linked (Man) hydroxytryptophan" evidence="4">
    <location>
        <position position="119"/>
    </location>
</feature>
<feature type="glycosylation site" description="C-linked (Man) hydroxytryptophan" evidence="4">
    <location>
        <position position="129"/>
    </location>
</feature>
<feature type="glycosylation site" description="C-linked (Man) hydroxytryptophan" evidence="4">
    <location>
        <position position="136"/>
    </location>
</feature>
<feature type="glycosylation site" description="C-linked (Man) hydroxytryptophan" evidence="4">
    <location>
        <position position="139"/>
    </location>
</feature>
<feature type="glycosylation site" description="C-linked (Man) tryptophan" evidence="4">
    <location>
        <position position="146"/>
    </location>
</feature>
<feature type="glycosylation site" description="C-linked (Man) hydroxytryptophan" evidence="4">
    <location>
        <position position="149"/>
    </location>
</feature>
<feature type="glycosylation site" description="C-linked (Man) tryptophan" evidence="4">
    <location>
        <position position="156"/>
    </location>
</feature>
<feature type="glycosylation site" description="C-linked (Man) hydroxytryptophan" evidence="4">
    <location>
        <position position="159"/>
    </location>
</feature>
<feature type="glycosylation site" description="C-linked (Man) hydroxytryptophan" evidence="4">
    <location>
        <position position="166"/>
    </location>
</feature>
<feature type="glycosylation site" description="C-linked (Man) hydroxytryptophan" evidence="4">
    <location>
        <position position="169"/>
    </location>
</feature>
<feature type="glycosylation site" description="C-linked (Man) tryptophan" evidence="4">
    <location>
        <position position="176"/>
    </location>
</feature>
<feature type="glycosylation site" description="C-linked (Man) hydroxytryptophan" evidence="4">
    <location>
        <position position="179"/>
    </location>
</feature>
<feature type="glycosylation site" description="C-linked (Man) tryptophan" evidence="4">
    <location>
        <position position="186"/>
    </location>
</feature>
<feature type="glycosylation site" description="C-linked (Man) hydroxytryptophan" evidence="4">
    <location>
        <position position="189"/>
    </location>
</feature>
<feature type="glycosylation site" description="C-linked (Man) tryptophan" evidence="4">
    <location>
        <position position="196"/>
    </location>
</feature>
<feature type="glycosylation site" description="C-linked (Man) hydroxytryptophan" evidence="4">
    <location>
        <position position="199"/>
    </location>
</feature>
<feature type="glycosylation site" description="C-linked (Man) tryptophan" evidence="4">
    <location>
        <position position="206"/>
    </location>
</feature>
<feature type="glycosylation site" description="C-linked (Man) hydroxytryptophan" evidence="4">
    <location>
        <position position="209"/>
    </location>
</feature>
<feature type="glycosylation site" description="C-linked (Man) tryptophan" evidence="4">
    <location>
        <position position="216"/>
    </location>
</feature>
<feature type="glycosylation site" description="C-linked (Man) hydroxytryptophan" evidence="4">
    <location>
        <position position="219"/>
    </location>
</feature>
<feature type="glycosylation site" description="C-linked (Man) hydroxytryptophan" evidence="4">
    <location>
        <position position="226"/>
    </location>
</feature>
<feature type="glycosylation site" description="C-linked (Man) hydroxytryptophan" evidence="4">
    <location>
        <position position="229"/>
    </location>
</feature>
<feature type="glycosylation site" description="C-linked (Man) tryptophan" evidence="4">
    <location>
        <position position="236"/>
    </location>
</feature>
<feature type="glycosylation site" description="C-linked (Man) hydroxytryptophan" evidence="4">
    <location>
        <position position="239"/>
    </location>
</feature>
<feature type="glycosylation site" description="C-linked (Man) hydroxytryptophan" evidence="4">
    <location>
        <position position="246"/>
    </location>
</feature>
<feature type="glycosylation site" description="C-linked (Man) hydroxytryptophan" evidence="4">
    <location>
        <position position="249"/>
    </location>
</feature>
<feature type="glycosylation site" description="C-linked (Man) tryptophan" evidence="4">
    <location>
        <position position="256"/>
    </location>
</feature>
<feature type="glycosylation site" description="C-linked (Man) hydroxytryptophan" evidence="4">
    <location>
        <position position="259"/>
    </location>
</feature>
<feature type="glycosylation site" description="C-linked (Man) hydroxytryptophan" evidence="4">
    <location>
        <position position="266"/>
    </location>
</feature>
<feature type="glycosylation site" description="C-linked (Man) hydroxytryptophan" evidence="4">
    <location>
        <position position="269"/>
    </location>
</feature>
<feature type="glycosylation site" description="C-linked (Man) tryptophan" evidence="4">
    <location>
        <position position="276"/>
    </location>
</feature>
<feature type="glycosylation site" description="C-linked (Man) hydroxytryptophan" evidence="4">
    <location>
        <position position="279"/>
    </location>
</feature>
<feature type="glycosylation site" description="C-linked (Man) tryptophan" evidence="4">
    <location>
        <position position="286"/>
    </location>
</feature>
<feature type="glycosylation site" description="C-linked (Man) hydroxytryptophan" evidence="4">
    <location>
        <position position="289"/>
    </location>
</feature>
<feature type="glycosylation site" description="C-linked (Man) tryptophan" evidence="4">
    <location>
        <position position="296"/>
    </location>
</feature>
<feature type="glycosylation site" description="C-linked (Man) hydroxytryptophan" evidence="4">
    <location>
        <position position="299"/>
    </location>
</feature>
<feature type="glycosylation site" description="C-linked (Man) tryptophan" evidence="4">
    <location>
        <position position="306"/>
    </location>
</feature>
<feature type="glycosylation site" description="C-linked (Man) hydroxytryptophan" evidence="4">
    <location>
        <position position="309"/>
    </location>
</feature>
<keyword id="KW-0903">Direct protein sequencing</keyword>
<keyword id="KW-0325">Glycoprotein</keyword>
<keyword id="KW-0379">Hydroxylation</keyword>
<keyword id="KW-0677">Repeat</keyword>
<keyword id="KW-0964">Secreted</keyword>
<keyword id="KW-0732">Signal</keyword>
<sequence length="431" mass="48043">MARNMNILTLFAVLLGSASAVYHPPSWTAWIAPKPWTAWKVPPPAWTAWKAHPPAWTAWKATPKPWTAWKAPPPAWTAWKATPKPWTAWKAPPPTWTAWKATPKPWTAWKAPPPVWTAWKATPKPRTAWKAPPPTWTAWKAAPKPWTAWKATPKPWTAWKAPPPAWTAWKATPKPWTAWKATPKPWTAWKATPKPWTAWKATPKPWTVWKATPKPWTAWKAPPPAWTAWKATPKPWTAWKAPPPAWTAWKATPKPWTAWKAPPPAWTAWKATPKPWTAWKATPKPWTAWKATPKPWTAWKATPKPWTAWRATPPPTWTAWHGHGYGGYGKPGKPGKPGSKGPRGPAGPPGATGKTGRTGATGKRGPPGYPGKPGVPGRNGYVHIVFDGYGKWEIGKIERKNIREAVAKAWTAWNAGHGHGWTAWTAPPAYG</sequence>
<reference evidence="6 8" key="1">
    <citation type="journal article" date="2009" name="J. Biol. Chem.">
        <title>Glycosylated hydroxytryptophan in a mussel adhesive protein from Perna viridis.</title>
        <authorList>
            <person name="Zhao H."/>
            <person name="Sagert J."/>
            <person name="Hwang D.S."/>
            <person name="Waite J.H."/>
        </authorList>
    </citation>
    <scope>NUCLEOTIDE SEQUENCE [MRNA]</scope>
    <scope>PROTEIN SEQUENCE OF 21-34</scope>
    <scope>PROTEIN SEQUENCE OF REPEAT A</scope>
    <scope>PROTEIN SEQUENCE OF REPEAT B</scope>
    <scope>TISSUE SPECIFICITY</scope>
    <scope>HYDROXYLATION AT TYR-22; PRO-33; TRP-46; TRP-49; TRP-56; TRP-59; PRO-65; TRP-69; PRO-72; PRO-73; PRO-74; TRP-76; TRP-79; PRO-85; TRP-89; PRO-92; PRO-93; PRO-94; TRP-96; TRP-99; PRO-105; TRP-109; PRO-112; PRO-113; PRO-114; TRP-116; TRP-119; PRO-125; TRP-129; PRO-132; PRO-133; PRO-134; TRP-136; TRP-139; PRO-145; TRP-149; PRO-155; TRP-159; PRO-162; PRO-163; PRO-164; TRP-166; TRP-169; PRO-175; TRP-179; PRO-185; TRP-189; PRO-195; TRP-199; PRO-205; TRP-209; PRO-215; TRP-219; PRO-222; PRO-223; PRO-224; TRP-226; TRP-229; PRO-235; TRP-239; PRO-242; PRO-243; PRO-244; TRP-246; TRP-249; PRO-255; TRP-259; PRO-262; PRO-263; PRO-264; TRP-266; TRP-269; PRO-275; TRP-279; PRO-285; TRP-289; PRO-295; TRP-299; PRO-305; TRP-309; PRO-367; PRO-370 AND PRO-376</scope>
    <scope>GLYCOSYLATION AT TRP-46; TRP-49; TRP-56; TRP-59; TRP-66; TRP-69; TRP-76; TRP-79; TRP-86; TRP-89; TRP-96; TRP-99; TRP-106; TRP-109; TRP-116; TRP-119; TRP-129; TRP-136; TRP-139; TRP-146; TRP-149; TRP-156; TRP-159; TRP-166; TRP-169; TRP-176; TRP-179; TRP-186; TRP-189; TRP-196; TRP-199; TRP-206; TRP-209; TRP-216; TRP-219; TRP-226; TRP-229; TRP-236; TRP-239; TRP-246; TRP-249; TRP-256; TRP-259; TRP-266; TRP-269; TRP-276; TRP-279; TRP-286; TRP-289; TRP-296; TRP-299; TRP-306 AND TRP-309</scope>
    <scope>IDENTIFICATION BY MASS SPECTROMETRY</scope>
    <source>
        <tissue evidence="4">Foot</tissue>
    </source>
</reference>